<sequence length="266" mass="28724">MLMSKLADVFKNHKVFIPFIVADDPDFETTVKNVVALAKGGADIVELGIPFSDPVADGPVIQAADLRAFAANVRTKTVFDIVEAARKETAVPIVFLTYLNIVFKYGYDAFLKRCADLNVAGLVIPDLPYESRDEIVPIAEKYGIDIIPLITPTSGHRIEKIAKSASGFIYVVSSMGITGERDEFFAGLKALVAEIKQYTNVPTAIGFGIHTPEQAQTMAGIADGVIIGSAIVDLVAKEKQQAPAAIEKFTKQIRVAVDAKKQISVK</sequence>
<reference key="1">
    <citation type="journal article" date="1990" name="J. Biochem.">
        <title>Nucleotide sequences and genomic constitution of five tryptophan genes of Lactobacillus casei.</title>
        <authorList>
            <person name="Natori Y."/>
            <person name="Kano Y."/>
            <person name="Imamoto F."/>
        </authorList>
    </citation>
    <scope>NUCLEOTIDE SEQUENCE [GENOMIC DNA]</scope>
</reference>
<dbReference type="EC" id="4.2.1.20" evidence="1"/>
<dbReference type="EMBL" id="D00496">
    <property type="protein sequence ID" value="BAA00387.1"/>
    <property type="molecule type" value="Genomic_DNA"/>
</dbReference>
<dbReference type="PIR" id="S42347">
    <property type="entry name" value="JS0344"/>
</dbReference>
<dbReference type="SMR" id="P17166"/>
<dbReference type="eggNOG" id="COG0159">
    <property type="taxonomic scope" value="Bacteria"/>
</dbReference>
<dbReference type="UniPathway" id="UPA00035">
    <property type="reaction ID" value="UER00044"/>
</dbReference>
<dbReference type="GO" id="GO:0005829">
    <property type="term" value="C:cytosol"/>
    <property type="evidence" value="ECO:0007669"/>
    <property type="project" value="TreeGrafter"/>
</dbReference>
<dbReference type="GO" id="GO:0004834">
    <property type="term" value="F:tryptophan synthase activity"/>
    <property type="evidence" value="ECO:0007669"/>
    <property type="project" value="UniProtKB-UniRule"/>
</dbReference>
<dbReference type="CDD" id="cd04724">
    <property type="entry name" value="Tryptophan_synthase_alpha"/>
    <property type="match status" value="1"/>
</dbReference>
<dbReference type="FunFam" id="3.20.20.70:FF:000037">
    <property type="entry name" value="Tryptophan synthase alpha chain"/>
    <property type="match status" value="1"/>
</dbReference>
<dbReference type="Gene3D" id="3.20.20.70">
    <property type="entry name" value="Aldolase class I"/>
    <property type="match status" value="1"/>
</dbReference>
<dbReference type="HAMAP" id="MF_00131">
    <property type="entry name" value="Trp_synth_alpha"/>
    <property type="match status" value="1"/>
</dbReference>
<dbReference type="InterPro" id="IPR013785">
    <property type="entry name" value="Aldolase_TIM"/>
</dbReference>
<dbReference type="InterPro" id="IPR011060">
    <property type="entry name" value="RibuloseP-bd_barrel"/>
</dbReference>
<dbReference type="InterPro" id="IPR018204">
    <property type="entry name" value="Trp_synthase_alpha_AS"/>
</dbReference>
<dbReference type="InterPro" id="IPR002028">
    <property type="entry name" value="Trp_synthase_suA"/>
</dbReference>
<dbReference type="NCBIfam" id="TIGR00262">
    <property type="entry name" value="trpA"/>
    <property type="match status" value="1"/>
</dbReference>
<dbReference type="PANTHER" id="PTHR43406:SF1">
    <property type="entry name" value="TRYPTOPHAN SYNTHASE ALPHA CHAIN, CHLOROPLASTIC"/>
    <property type="match status" value="1"/>
</dbReference>
<dbReference type="PANTHER" id="PTHR43406">
    <property type="entry name" value="TRYPTOPHAN SYNTHASE, ALPHA CHAIN"/>
    <property type="match status" value="1"/>
</dbReference>
<dbReference type="Pfam" id="PF00290">
    <property type="entry name" value="Trp_syntA"/>
    <property type="match status" value="1"/>
</dbReference>
<dbReference type="SUPFAM" id="SSF51366">
    <property type="entry name" value="Ribulose-phoshate binding barrel"/>
    <property type="match status" value="1"/>
</dbReference>
<dbReference type="PROSITE" id="PS00167">
    <property type="entry name" value="TRP_SYNTHASE_ALPHA"/>
    <property type="match status" value="1"/>
</dbReference>
<keyword id="KW-0028">Amino-acid biosynthesis</keyword>
<keyword id="KW-0057">Aromatic amino acid biosynthesis</keyword>
<keyword id="KW-0456">Lyase</keyword>
<keyword id="KW-0822">Tryptophan biosynthesis</keyword>
<evidence type="ECO:0000255" key="1">
    <source>
        <dbReference type="HAMAP-Rule" id="MF_00131"/>
    </source>
</evidence>
<comment type="function">
    <text evidence="1">The alpha subunit is responsible for the aldol cleavage of indoleglycerol phosphate to indole and glyceraldehyde 3-phosphate.</text>
</comment>
<comment type="catalytic activity">
    <reaction evidence="1">
        <text>(1S,2R)-1-C-(indol-3-yl)glycerol 3-phosphate + L-serine = D-glyceraldehyde 3-phosphate + L-tryptophan + H2O</text>
        <dbReference type="Rhea" id="RHEA:10532"/>
        <dbReference type="ChEBI" id="CHEBI:15377"/>
        <dbReference type="ChEBI" id="CHEBI:33384"/>
        <dbReference type="ChEBI" id="CHEBI:57912"/>
        <dbReference type="ChEBI" id="CHEBI:58866"/>
        <dbReference type="ChEBI" id="CHEBI:59776"/>
        <dbReference type="EC" id="4.2.1.20"/>
    </reaction>
</comment>
<comment type="pathway">
    <text evidence="1">Amino-acid biosynthesis; L-tryptophan biosynthesis; L-tryptophan from chorismate: step 5/5.</text>
</comment>
<comment type="subunit">
    <text evidence="1">Tetramer of two alpha and two beta chains.</text>
</comment>
<comment type="similarity">
    <text evidence="1">Belongs to the TrpA family.</text>
</comment>
<gene>
    <name evidence="1" type="primary">trpA</name>
</gene>
<name>TRPA_LACCA</name>
<proteinExistence type="inferred from homology"/>
<accession>P17166</accession>
<protein>
    <recommendedName>
        <fullName evidence="1">Tryptophan synthase alpha chain</fullName>
        <ecNumber evidence="1">4.2.1.20</ecNumber>
    </recommendedName>
</protein>
<feature type="chain" id="PRO_0000098793" description="Tryptophan synthase alpha chain">
    <location>
        <begin position="1"/>
        <end position="266"/>
    </location>
</feature>
<feature type="active site" description="Proton acceptor" evidence="1">
    <location>
        <position position="46"/>
    </location>
</feature>
<feature type="active site" description="Proton acceptor" evidence="1">
    <location>
        <position position="57"/>
    </location>
</feature>
<organism>
    <name type="scientific">Lacticaseibacillus casei</name>
    <name type="common">Lactobacillus casei</name>
    <dbReference type="NCBI Taxonomy" id="1582"/>
    <lineage>
        <taxon>Bacteria</taxon>
        <taxon>Bacillati</taxon>
        <taxon>Bacillota</taxon>
        <taxon>Bacilli</taxon>
        <taxon>Lactobacillales</taxon>
        <taxon>Lactobacillaceae</taxon>
        <taxon>Lacticaseibacillus</taxon>
    </lineage>
</organism>